<keyword id="KW-0175">Coiled coil</keyword>
<keyword id="KW-1017">Isopeptide bond</keyword>
<keyword id="KW-0833">Ubl conjugation pathway</keyword>
<proteinExistence type="inferred from homology"/>
<reference key="1">
    <citation type="submission" date="2007-02" db="EMBL/GenBank/DDBJ databases">
        <title>Complete sequence of Mycobacterium sp. JLS.</title>
        <authorList>
            <consortium name="US DOE Joint Genome Institute"/>
            <person name="Copeland A."/>
            <person name="Lucas S."/>
            <person name="Lapidus A."/>
            <person name="Barry K."/>
            <person name="Detter J.C."/>
            <person name="Glavina del Rio T."/>
            <person name="Hammon N."/>
            <person name="Israni S."/>
            <person name="Dalin E."/>
            <person name="Tice H."/>
            <person name="Pitluck S."/>
            <person name="Chain P."/>
            <person name="Malfatti S."/>
            <person name="Shin M."/>
            <person name="Vergez L."/>
            <person name="Schmutz J."/>
            <person name="Larimer F."/>
            <person name="Land M."/>
            <person name="Hauser L."/>
            <person name="Kyrpides N."/>
            <person name="Mikhailova N."/>
            <person name="Miller C.D."/>
            <person name="Anderson A.J."/>
            <person name="Sims R.C."/>
            <person name="Richardson P."/>
        </authorList>
    </citation>
    <scope>NUCLEOTIDE SEQUENCE [LARGE SCALE GENOMIC DNA]</scope>
    <source>
        <strain>JLS</strain>
    </source>
</reference>
<comment type="function">
    <text evidence="1">Protein modifier that is covalently attached to lysine residues of substrate proteins, thereby targeting them for proteasomal degradation. The tagging system is termed pupylation.</text>
</comment>
<comment type="pathway">
    <text evidence="1">Protein degradation; proteasomal Pup-dependent pathway.</text>
</comment>
<comment type="subunit">
    <text evidence="1">Strongly interacts with the proteasome-associated ATPase ARC through a hydrophobic interface; the interacting region of Pup lies in its C-terminal half. There is one Pup binding site per ARC hexamer ring.</text>
</comment>
<comment type="domain">
    <text evidence="1">The N-terminal unstructured half of Pup provides a signal required to initiate unfolding and degradation by the proteasome but is not needed for pupylation, while the C-terminal helical half of Pup interacts with ARC to target proteins to the proteasome.</text>
</comment>
<comment type="PTM">
    <text evidence="1">Is modified by deamidation of its C-terminal glutamine to glutamate by the deamidase Dop, a prerequisite to the subsequent pupylation process.</text>
</comment>
<comment type="similarity">
    <text evidence="1">Belongs to the prokaryotic ubiquitin-like protein family.</text>
</comment>
<name>PUP_MYCSJ</name>
<protein>
    <recommendedName>
        <fullName evidence="1">Prokaryotic ubiquitin-like protein Pup</fullName>
    </recommendedName>
    <alternativeName>
        <fullName evidence="1">Bacterial ubiquitin-like modifier</fullName>
    </alternativeName>
</protein>
<organism>
    <name type="scientific">Mycobacterium sp. (strain JLS)</name>
    <dbReference type="NCBI Taxonomy" id="164757"/>
    <lineage>
        <taxon>Bacteria</taxon>
        <taxon>Bacillati</taxon>
        <taxon>Actinomycetota</taxon>
        <taxon>Actinomycetes</taxon>
        <taxon>Mycobacteriales</taxon>
        <taxon>Mycobacteriaceae</taxon>
        <taxon>Mycobacterium</taxon>
    </lineage>
</organism>
<gene>
    <name evidence="1" type="primary">pup</name>
    <name type="ordered locus">Mjls_3142</name>
</gene>
<sequence length="64" mass="6870">MAQEQTKRGGGGGEDDDLSGGAGAGQERREKLAEETDDLLDEIDDVLEENAEDFVRAYVQKGGQ</sequence>
<accession>A3Q194</accession>
<evidence type="ECO:0000255" key="1">
    <source>
        <dbReference type="HAMAP-Rule" id="MF_02106"/>
    </source>
</evidence>
<evidence type="ECO:0000256" key="2">
    <source>
        <dbReference type="SAM" id="MobiDB-lite"/>
    </source>
</evidence>
<dbReference type="EMBL" id="CP000580">
    <property type="protein sequence ID" value="ABN98921.1"/>
    <property type="molecule type" value="Genomic_DNA"/>
</dbReference>
<dbReference type="SMR" id="A3Q194"/>
<dbReference type="KEGG" id="mjl:Mjls_3142"/>
<dbReference type="HOGENOM" id="CLU_183816_1_0_11"/>
<dbReference type="BioCyc" id="MSP164757:G1G8C-3167-MONOMER"/>
<dbReference type="UniPathway" id="UPA00997"/>
<dbReference type="GO" id="GO:0070628">
    <property type="term" value="F:proteasome binding"/>
    <property type="evidence" value="ECO:0007669"/>
    <property type="project" value="UniProtKB-UniRule"/>
</dbReference>
<dbReference type="GO" id="GO:0031386">
    <property type="term" value="F:protein tag activity"/>
    <property type="evidence" value="ECO:0007669"/>
    <property type="project" value="UniProtKB-UniRule"/>
</dbReference>
<dbReference type="GO" id="GO:0019941">
    <property type="term" value="P:modification-dependent protein catabolic process"/>
    <property type="evidence" value="ECO:0007669"/>
    <property type="project" value="UniProtKB-UniRule"/>
</dbReference>
<dbReference type="GO" id="GO:0010498">
    <property type="term" value="P:proteasomal protein catabolic process"/>
    <property type="evidence" value="ECO:0007669"/>
    <property type="project" value="UniProtKB-UniRule"/>
</dbReference>
<dbReference type="GO" id="GO:0070490">
    <property type="term" value="P:protein pupylation"/>
    <property type="evidence" value="ECO:0007669"/>
    <property type="project" value="UniProtKB-UniRule"/>
</dbReference>
<dbReference type="HAMAP" id="MF_02106">
    <property type="entry name" value="Pup"/>
    <property type="match status" value="1"/>
</dbReference>
<dbReference type="InterPro" id="IPR008515">
    <property type="entry name" value="Ubiquitin-like_Pup"/>
</dbReference>
<dbReference type="NCBIfam" id="TIGR03687">
    <property type="entry name" value="pupylate_cterm"/>
    <property type="match status" value="1"/>
</dbReference>
<dbReference type="Pfam" id="PF05639">
    <property type="entry name" value="Pup"/>
    <property type="match status" value="1"/>
</dbReference>
<feature type="chain" id="PRO_0000390596" description="Prokaryotic ubiquitin-like protein Pup">
    <location>
        <begin position="1"/>
        <end position="64"/>
    </location>
</feature>
<feature type="region of interest" description="Disordered" evidence="2">
    <location>
        <begin position="1"/>
        <end position="37"/>
    </location>
</feature>
<feature type="region of interest" description="ARC ATPase binding" evidence="1">
    <location>
        <begin position="21"/>
        <end position="58"/>
    </location>
</feature>
<feature type="coiled-coil region" evidence="1">
    <location>
        <begin position="24"/>
        <end position="52"/>
    </location>
</feature>
<feature type="modified residue" description="Deamidated glutamine" evidence="1">
    <location>
        <position position="64"/>
    </location>
</feature>
<feature type="cross-link" description="Isoglutamyl lysine isopeptide (Gln-Lys) (interchain with K-? in acceptor proteins)" evidence="1">
    <location>
        <position position="64"/>
    </location>
</feature>